<reference key="1">
    <citation type="journal article" date="1990" name="Science">
        <title>Molecular cloning and functional expression of the cardiac sarcolemmal Na(+)-Ca2+ exchanger.</title>
        <authorList>
            <person name="Nicoll D.A."/>
            <person name="Longoni S."/>
            <person name="Philipson K.D."/>
        </authorList>
    </citation>
    <scope>NUCLEOTIDE SEQUENCE [MRNA]</scope>
    <scope>FUNCTION</scope>
    <scope>TRANSPORTER ACTIVITY</scope>
    <scope>SUBCELLULAR LOCATION</scope>
    <scope>TISSUE SPECIFICITY</scope>
    <source>
        <tissue>Heart</tissue>
    </source>
</reference>
<reference key="2">
    <citation type="journal article" date="1991" name="Ann. N. Y. Acad. Sci.">
        <title>Molecular studies of the cardiac sarcolemmal sodium-calcium exchanger.</title>
        <authorList>
            <person name="Nicoll D.A."/>
            <person name="Philipson K.D."/>
        </authorList>
    </citation>
    <scope>NUCLEOTIDE SEQUENCE [MRNA]</scope>
    <scope>FUNCTION</scope>
    <scope>TRANSPORTER ACTIVITY</scope>
    <scope>SUBCELLULAR LOCATION</scope>
    <source>
        <tissue>Heart</tissue>
    </source>
</reference>
<reference key="3">
    <citation type="journal article" date="1998" name="Am. J. Physiol.">
        <title>Functional comparison of the three isoforms of the Na+/Ca2+ exchanger (NCX1, NCX2, NCX3).</title>
        <authorList>
            <person name="Linck B."/>
            <person name="Qiu Z."/>
            <person name="He Z."/>
            <person name="Tong Q."/>
            <person name="Hilgemann D.W."/>
            <person name="Philipson K.D."/>
        </authorList>
    </citation>
    <scope>FUNCTION</scope>
    <scope>TRANSPORTER ACTIVITY</scope>
    <scope>SUBCELLULAR LOCATION</scope>
    <scope>ACTIVITY REGULATION</scope>
</reference>
<reference key="4">
    <citation type="journal article" date="2013" name="Mol. Aspects Med.">
        <title>The SLC8 gene family of sodium-calcium exchangers (NCX) - structure, function, and regulation in health and disease.</title>
        <authorList>
            <person name="Khananshvili D."/>
        </authorList>
    </citation>
    <scope>REVIEW</scope>
</reference>
<reference key="5">
    <citation type="journal article" date="2006" name="J. Biol. Chem.">
        <title>The crystal structure of the primary Ca2+ sensor of the Na+/Ca2+ exchanger reveals a novel Ca2+ binding motif.</title>
        <authorList>
            <person name="Nicoll D.A."/>
            <person name="Sawaya M.R."/>
            <person name="Kwon S."/>
            <person name="Cascio D."/>
            <person name="Philipson K.D."/>
            <person name="Abramson J."/>
        </authorList>
    </citation>
    <scope>X-RAY CRYSTALLOGRAPHY (2.5 ANGSTROMS) OF 402-541 IN COMPLEX WITH CALCIUM</scope>
    <scope>CALCIUM-BINDING SITES</scope>
    <scope>DOMAIN</scope>
</reference>
<reference key="6">
    <citation type="journal article" date="2007" name="Proc. Natl. Acad. Sci. U.S.A.">
        <title>The second Ca2+-binding domain of the Na+ Ca2+ exchanger is essential for regulation: crystal structures and mutational analysis.</title>
        <authorList>
            <person name="Besserer G.M."/>
            <person name="Ottolia M."/>
            <person name="Nicoll D.A."/>
            <person name="Chaptal V."/>
            <person name="Cascio D."/>
            <person name="Philipson K.D."/>
            <person name="Abramson J."/>
        </authorList>
    </citation>
    <scope>X-RAY CRYSTALLOGRAPHY (1.45 ANGSTROMS) OF 533-721 ALONE AND IN COMPLEX WITH CALCIUM IONS</scope>
    <scope>CALCIUM-BINDING SITES</scope>
    <scope>FUNCTION</scope>
    <scope>SUBCELLULAR LOCATION</scope>
    <scope>ACTIVITY REGULATION</scope>
    <scope>MUTAGENESIS OF GLU-548; ASP-584; ASP-610 AND LYS-617</scope>
</reference>
<reference key="7">
    <citation type="journal article" date="2009" name="J. Biol. Chem.">
        <title>Structure and functional analysis of a Ca2+ sensor mutant of the Na+/Ca2+ exchanger.</title>
        <authorList>
            <person name="Chaptal V."/>
            <person name="Ottolia M."/>
            <person name="Mercado-Besserer G."/>
            <person name="Nicoll D.A."/>
            <person name="Philipson K.D."/>
            <person name="Abramson J."/>
        </authorList>
    </citation>
    <scope>X-RAY CRYSTALLOGRAPHY (2.40 ANGSTROMS) OF 402-541 IN COMPLEX WITH CALCIUM</scope>
    <scope>FUNCTION</scope>
    <scope>SUBCELLULAR LOCATION</scope>
    <scope>ACTIVITY REGULATION</scope>
    <scope>DOMAIN</scope>
</reference>
<reference key="8">
    <citation type="journal article" date="2012" name="PLoS ONE">
        <title>A common Ca2+-driven interdomain module governs eukaryotic NCX regulation.</title>
        <authorList>
            <person name="Giladi M."/>
            <person name="Sasson Y."/>
            <person name="Fang X."/>
            <person name="Hiller R."/>
            <person name="Buki T."/>
            <person name="Wang Y.X."/>
            <person name="Hirsch J.A."/>
            <person name="Khananshvili D."/>
        </authorList>
    </citation>
    <scope>X-RAY CRYSTALLOGRAPHY (2.68 ANGSTROMS) OF 403-724 IN COMPLEX WITH CALCIUM</scope>
    <scope>DOMAIN</scope>
</reference>
<accession>P23685</accession>
<organism>
    <name type="scientific">Canis lupus familiaris</name>
    <name type="common">Dog</name>
    <name type="synonym">Canis familiaris</name>
    <dbReference type="NCBI Taxonomy" id="9615"/>
    <lineage>
        <taxon>Eukaryota</taxon>
        <taxon>Metazoa</taxon>
        <taxon>Chordata</taxon>
        <taxon>Craniata</taxon>
        <taxon>Vertebrata</taxon>
        <taxon>Euteleostomi</taxon>
        <taxon>Mammalia</taxon>
        <taxon>Eutheria</taxon>
        <taxon>Laurasiatheria</taxon>
        <taxon>Carnivora</taxon>
        <taxon>Caniformia</taxon>
        <taxon>Canidae</taxon>
        <taxon>Canis</taxon>
    </lineage>
</organism>
<sequence length="970" mass="108004">MLQLRLLPTFSMGCHLLAVVALLFSHVDLISAETEMEGEGNETGECTGSYYCKKGVILPIWEPQDPSFGDKIARATVYFVAMVYMFLGVSIIADRFMSSIEVITSQEKEITIKKPNGETTKTTVRIWNETVSNLTLMALGSSAPEILLSVIEVCGHNFTAGDLGPSTIVGSAAFNMFIIIALCVYVVPDGETRKIKHLRVFFVTAAWSIFAYTWLYIILSVISPGVVEVWEGLLTFFFFPICVVFAWVADRRLLFYKYVYKRYRAGKQRGMIIEHEGDRPSSKTEIEMDGKVVNSHVDNFLDGALVLEVDERDQDDEEARREMARILKELKQKHPEKEIEQLIELANYQVLSQQQKSRAFYRIQATRLMTGAGNILKRHAADQARKAVSMHEVNTEVAENDPVSKIFFEQGTYQCLENCGTVALTIIRRGGDLTNTVFVDFRTEDGTANAGSDYEFTEGTVVFKPGETQKEIRVGIIDDDIFEEDENFLVHLSNVKVSSEASEDGILEANHVSALACLGSPSTATVTIFDDDHAGIFTFEEPVTHVSESIGIMEVKVLRTSGARGNVIVPYKTIEGTARGGGEDFEDTCGELEFQNDEIVKTISVKVIDDEEYEKNKTFFLEIGEPRLVEMSEKKALLLNELGGFTITGKYLYGQPVFRKVHAREHPIPSTVITIAEEYDDKQPLTSKEEEERRIAEMGRPILGEHTKLEVIIEESYEFKSTVDKLIKKTNLALVVGTNSWREQFIEAITVSAGEDDDDDECGEEKLPSCFDYVMHFLTVFWKVLFAFVPPTEYWNGWACFIVSILMIGILTAFIGDLASHFGCTIGLKDSVTAVVFVALGTSVPDTFASKVAATQDQYADASIGNVTGSNAVNVFLGIGVAWSIAAIYHAANGEQFKVSPGTLAFSVTLFTIFAFINVGVLLYRRRPEIGGELGGPRTAKLLTSCLFVLLWLLYIFFSSLEAYCHIKGF</sequence>
<evidence type="ECO:0000250" key="1">
    <source>
        <dbReference type="UniProtKB" id="P70414"/>
    </source>
</evidence>
<evidence type="ECO:0000255" key="2"/>
<evidence type="ECO:0000269" key="3">
    <source>
    </source>
</evidence>
<evidence type="ECO:0000269" key="4">
    <source>
    </source>
</evidence>
<evidence type="ECO:0000269" key="5">
    <source>
    </source>
</evidence>
<evidence type="ECO:0000269" key="6">
    <source>
    </source>
</evidence>
<evidence type="ECO:0000269" key="7">
    <source>
    </source>
</evidence>
<evidence type="ECO:0000269" key="8">
    <source>
    </source>
</evidence>
<evidence type="ECO:0000269" key="9">
    <source>
    </source>
</evidence>
<evidence type="ECO:0000303" key="10">
    <source>
    </source>
</evidence>
<evidence type="ECO:0000305" key="11"/>
<evidence type="ECO:0000305" key="12">
    <source>
    </source>
</evidence>
<evidence type="ECO:0007744" key="13">
    <source>
        <dbReference type="PDB" id="2DPK"/>
    </source>
</evidence>
<evidence type="ECO:0007744" key="14">
    <source>
        <dbReference type="PDB" id="2FWS"/>
    </source>
</evidence>
<evidence type="ECO:0007744" key="15">
    <source>
        <dbReference type="PDB" id="2FWU"/>
    </source>
</evidence>
<evidence type="ECO:0007744" key="16">
    <source>
        <dbReference type="PDB" id="2QVM"/>
    </source>
</evidence>
<evidence type="ECO:0007744" key="17">
    <source>
        <dbReference type="PDB" id="3GIN"/>
    </source>
</evidence>
<evidence type="ECO:0007744" key="18">
    <source>
        <dbReference type="PDB" id="3US9"/>
    </source>
</evidence>
<evidence type="ECO:0007829" key="19">
    <source>
        <dbReference type="PDB" id="2QVK"/>
    </source>
</evidence>
<evidence type="ECO:0007829" key="20">
    <source>
        <dbReference type="PDB" id="2QVM"/>
    </source>
</evidence>
<evidence type="ECO:0007829" key="21">
    <source>
        <dbReference type="PDB" id="3GIN"/>
    </source>
</evidence>
<evidence type="ECO:0007829" key="22">
    <source>
        <dbReference type="PDB" id="3US9"/>
    </source>
</evidence>
<evidence type="ECO:0007829" key="23">
    <source>
        <dbReference type="PDB" id="6BV7"/>
    </source>
</evidence>
<comment type="function">
    <text evidence="1 4 5 6 7 9">Mediates the exchange of one Ca(2+) ion against three to four Na(+) ions across the cell membrane, and thereby contributes to the regulation of cytoplasmic Ca(2+) levels and Ca(2+)-dependent cellular processes (PubMed:1700476, PubMed:1785844, PubMed:17962412, PubMed:9486131). Contributes to Ca(2+) transport during excitation-contraction coupling in muscle. In a first phase, voltage-gated channels mediate the rapid increase of cytoplasmic Ca(2+) levels due to release of Ca(2+) stores from the endoplasmic reticulum. SLC8A1 mediates the export of Ca(2+) from the cell during the next phase, so that cytoplasmic Ca(2+) levels rapidly return to baseline. Required for normal embryonic heart development and the onset of heart contractions (By similarity).</text>
</comment>
<comment type="catalytic activity">
    <reaction evidence="4 5 9">
        <text>Ca(2+)(in) + 3 Na(+)(out) = Ca(2+)(out) + 3 Na(+)(in)</text>
        <dbReference type="Rhea" id="RHEA:69955"/>
        <dbReference type="ChEBI" id="CHEBI:29101"/>
        <dbReference type="ChEBI" id="CHEBI:29108"/>
    </reaction>
</comment>
<comment type="activity regulation">
    <text evidence="6 7 9">Activated by micromolar levels of Ca(2+). In the absence of regulatory Ca(2+), channels open rapidly, and then inactivate rapidly. Inactivation is enhanced by Na(+) and is inhibited by micromolar levels of Ca(2+).</text>
</comment>
<comment type="subcellular location">
    <subcellularLocation>
        <location evidence="4 5 6 7 9">Cell membrane</location>
        <topology evidence="11">Multi-pass membrane protein</topology>
    </subcellularLocation>
    <subcellularLocation>
        <location evidence="4">Cell membrane</location>
        <location evidence="4">Sarcolemma</location>
    </subcellularLocation>
</comment>
<comment type="tissue specificity">
    <text evidence="4">Cardiac sarcolemma (at protein level).</text>
</comment>
<comment type="domain">
    <text evidence="3 6 7 8">The cytoplasmic Calx-beta domains bind the regulatory Ca(2+). The first Calx-beta domain can bind up to four Ca(2+) ions (PubMed:16774926, PubMed:19332552, PubMed:22768191). The second domain can bind another two Ca(2+) ions that are essential for calcium-regulated ion exchange (PubMed:17962412).</text>
</comment>
<comment type="similarity">
    <text evidence="11">Belongs to the Ca(2+):cation antiporter (CaCA) (TC 2.A.19) family. SLC8 subfamily.</text>
</comment>
<dbReference type="EMBL" id="M57523">
    <property type="protein sequence ID" value="AAA62766.1"/>
    <property type="molecule type" value="mRNA"/>
</dbReference>
<dbReference type="PIR" id="A36417">
    <property type="entry name" value="A36417"/>
</dbReference>
<dbReference type="RefSeq" id="NP_001291891.1">
    <property type="nucleotide sequence ID" value="NM_001304962.1"/>
</dbReference>
<dbReference type="RefSeq" id="XP_013975680.1">
    <property type="nucleotide sequence ID" value="XM_014120205.1"/>
</dbReference>
<dbReference type="RefSeq" id="XP_013975681.1">
    <property type="nucleotide sequence ID" value="XM_014120206.1"/>
</dbReference>
<dbReference type="RefSeq" id="XP_013975682.1">
    <property type="nucleotide sequence ID" value="XM_014120207.1"/>
</dbReference>
<dbReference type="RefSeq" id="XP_013975683.1">
    <property type="nucleotide sequence ID" value="XM_014120208.1"/>
</dbReference>
<dbReference type="RefSeq" id="XP_013975684.1">
    <property type="nucleotide sequence ID" value="XM_014120209.1"/>
</dbReference>
<dbReference type="RefSeq" id="XP_013975685.1">
    <property type="nucleotide sequence ID" value="XM_014120210.1"/>
</dbReference>
<dbReference type="RefSeq" id="XP_013975686.1">
    <property type="nucleotide sequence ID" value="XM_014120211.1"/>
</dbReference>
<dbReference type="RefSeq" id="XP_013975687.1">
    <property type="nucleotide sequence ID" value="XM_014120212.1"/>
</dbReference>
<dbReference type="RefSeq" id="XP_013975688.1">
    <property type="nucleotide sequence ID" value="XM_014120213.1"/>
</dbReference>
<dbReference type="RefSeq" id="XP_013975689.1">
    <property type="nucleotide sequence ID" value="XM_014120214.1"/>
</dbReference>
<dbReference type="RefSeq" id="XP_038546411.1">
    <property type="nucleotide sequence ID" value="XM_038690483.1"/>
</dbReference>
<dbReference type="RefSeq" id="XP_038546412.1">
    <property type="nucleotide sequence ID" value="XM_038690484.1"/>
</dbReference>
<dbReference type="RefSeq" id="XP_038546413.1">
    <property type="nucleotide sequence ID" value="XM_038690485.1"/>
</dbReference>
<dbReference type="RefSeq" id="XP_038546414.1">
    <property type="nucleotide sequence ID" value="XM_038690486.1"/>
</dbReference>
<dbReference type="RefSeq" id="XP_038546415.1">
    <property type="nucleotide sequence ID" value="XM_038690487.1"/>
</dbReference>
<dbReference type="RefSeq" id="XP_038546416.1">
    <property type="nucleotide sequence ID" value="XM_038690488.1"/>
</dbReference>
<dbReference type="RefSeq" id="XP_038546417.1">
    <property type="nucleotide sequence ID" value="XM_038690489.1"/>
</dbReference>
<dbReference type="RefSeq" id="XP_038546418.1">
    <property type="nucleotide sequence ID" value="XM_038690490.1"/>
</dbReference>
<dbReference type="RefSeq" id="XP_038546419.1">
    <property type="nucleotide sequence ID" value="XM_038690491.1"/>
</dbReference>
<dbReference type="PDB" id="2DPK">
    <property type="method" value="X-ray"/>
    <property type="resolution" value="2.50 A"/>
    <property type="chains" value="A=402-541"/>
</dbReference>
<dbReference type="PDB" id="2FWS">
    <property type="method" value="NMR"/>
    <property type="chains" value="A=403-541"/>
</dbReference>
<dbReference type="PDB" id="2FWU">
    <property type="method" value="NMR"/>
    <property type="chains" value="A=533-724"/>
</dbReference>
<dbReference type="PDB" id="2QVK">
    <property type="method" value="X-ray"/>
    <property type="resolution" value="1.45 A"/>
    <property type="chains" value="A=533-721"/>
</dbReference>
<dbReference type="PDB" id="2QVM">
    <property type="method" value="X-ray"/>
    <property type="resolution" value="1.70 A"/>
    <property type="chains" value="A=533-721"/>
</dbReference>
<dbReference type="PDB" id="3GIN">
    <property type="method" value="X-ray"/>
    <property type="resolution" value="2.40 A"/>
    <property type="chains" value="A/B=402-541"/>
</dbReference>
<dbReference type="PDB" id="3US9">
    <property type="method" value="X-ray"/>
    <property type="resolution" value="2.68 A"/>
    <property type="chains" value="A=403-724"/>
</dbReference>
<dbReference type="PDB" id="6BV7">
    <property type="method" value="NMR"/>
    <property type="chains" value="A=306-359"/>
</dbReference>
<dbReference type="PDBsum" id="2DPK"/>
<dbReference type="PDBsum" id="2FWS"/>
<dbReference type="PDBsum" id="2FWU"/>
<dbReference type="PDBsum" id="2QVK"/>
<dbReference type="PDBsum" id="2QVM"/>
<dbReference type="PDBsum" id="3GIN"/>
<dbReference type="PDBsum" id="3US9"/>
<dbReference type="PDBsum" id="6BV7"/>
<dbReference type="BMRB" id="P23685"/>
<dbReference type="SMR" id="P23685"/>
<dbReference type="DIP" id="DIP-59598N"/>
<dbReference type="FunCoup" id="P23685">
    <property type="interactions" value="162"/>
</dbReference>
<dbReference type="STRING" id="9615.ENSCAFP00000009692"/>
<dbReference type="GlyCosmos" id="P23685">
    <property type="glycosylation" value="2 sites, No reported glycans"/>
</dbReference>
<dbReference type="iPTMnet" id="P23685"/>
<dbReference type="SwissPalm" id="P23685"/>
<dbReference type="PaxDb" id="9612-ENSCAFP00000009692"/>
<dbReference type="Ensembl" id="ENSCAFT00000010451.6">
    <property type="protein sequence ID" value="ENSCAFP00000009692.5"/>
    <property type="gene ID" value="ENSCAFG00000023592.5"/>
</dbReference>
<dbReference type="Ensembl" id="ENSCAFT00845044459.1">
    <property type="protein sequence ID" value="ENSCAFP00845034837.1"/>
    <property type="gene ID" value="ENSCAFG00845024998.1"/>
</dbReference>
<dbReference type="GeneID" id="475738"/>
<dbReference type="KEGG" id="cfa:475738"/>
<dbReference type="CTD" id="6546"/>
<dbReference type="VEuPathDB" id="HostDB:ENSCAFG00845024998"/>
<dbReference type="VGNC" id="VGNC:46480">
    <property type="gene designation" value="SLC8A1"/>
</dbReference>
<dbReference type="eggNOG" id="KOG1306">
    <property type="taxonomic scope" value="Eukaryota"/>
</dbReference>
<dbReference type="GeneTree" id="ENSGT00940000155129"/>
<dbReference type="HOGENOM" id="CLU_012872_1_0_1"/>
<dbReference type="InParanoid" id="P23685"/>
<dbReference type="OMA" id="TFSMGCH"/>
<dbReference type="OrthoDB" id="418484at2759"/>
<dbReference type="TreeFam" id="TF314308"/>
<dbReference type="Reactome" id="R-CFA-418359">
    <property type="pathway name" value="Reduction of cytosolic Ca++ levels"/>
</dbReference>
<dbReference type="Reactome" id="R-CFA-425561">
    <property type="pathway name" value="Sodium/Calcium exchangers"/>
</dbReference>
<dbReference type="Reactome" id="R-CFA-5578775">
    <property type="pathway name" value="Ion homeostasis"/>
</dbReference>
<dbReference type="EvolutionaryTrace" id="P23685"/>
<dbReference type="Proteomes" id="UP000002254">
    <property type="component" value="Chromosome 17"/>
</dbReference>
<dbReference type="Proteomes" id="UP000694429">
    <property type="component" value="Unplaced"/>
</dbReference>
<dbReference type="Proteomes" id="UP000694542">
    <property type="component" value="Unplaced"/>
</dbReference>
<dbReference type="Proteomes" id="UP000805418">
    <property type="component" value="Chromosome 17"/>
</dbReference>
<dbReference type="GO" id="GO:0005654">
    <property type="term" value="C:nucleoplasm"/>
    <property type="evidence" value="ECO:0007669"/>
    <property type="project" value="Ensembl"/>
</dbReference>
<dbReference type="GO" id="GO:0005886">
    <property type="term" value="C:plasma membrane"/>
    <property type="evidence" value="ECO:0000314"/>
    <property type="project" value="UniProtKB"/>
</dbReference>
<dbReference type="GO" id="GO:0098794">
    <property type="term" value="C:postsynapse"/>
    <property type="evidence" value="ECO:0007669"/>
    <property type="project" value="GOC"/>
</dbReference>
<dbReference type="GO" id="GO:0042383">
    <property type="term" value="C:sarcolemma"/>
    <property type="evidence" value="ECO:0007669"/>
    <property type="project" value="UniProtKB-SubCell"/>
</dbReference>
<dbReference type="GO" id="GO:0030506">
    <property type="term" value="F:ankyrin binding"/>
    <property type="evidence" value="ECO:0007669"/>
    <property type="project" value="Ensembl"/>
</dbReference>
<dbReference type="GO" id="GO:0005509">
    <property type="term" value="F:calcium ion binding"/>
    <property type="evidence" value="ECO:0000314"/>
    <property type="project" value="UniProtKB"/>
</dbReference>
<dbReference type="GO" id="GO:1905060">
    <property type="term" value="F:calcium:monoatomic cation antiporter activity involved in regulation of postsynaptic cytosolic calcium ion concentration"/>
    <property type="evidence" value="ECO:0000314"/>
    <property type="project" value="SynGO"/>
</dbReference>
<dbReference type="GO" id="GO:0005432">
    <property type="term" value="F:calcium:sodium antiporter activity"/>
    <property type="evidence" value="ECO:0000314"/>
    <property type="project" value="UniProtKB"/>
</dbReference>
<dbReference type="GO" id="GO:0005516">
    <property type="term" value="F:calmodulin binding"/>
    <property type="evidence" value="ECO:0007669"/>
    <property type="project" value="UniProtKB-KW"/>
</dbReference>
<dbReference type="GO" id="GO:0070509">
    <property type="term" value="P:calcium ion import"/>
    <property type="evidence" value="ECO:0007669"/>
    <property type="project" value="Ensembl"/>
</dbReference>
<dbReference type="GO" id="GO:0070588">
    <property type="term" value="P:calcium ion transmembrane transport"/>
    <property type="evidence" value="ECO:0000314"/>
    <property type="project" value="UniProtKB"/>
</dbReference>
<dbReference type="GO" id="GO:0007154">
    <property type="term" value="P:cell communication"/>
    <property type="evidence" value="ECO:0007669"/>
    <property type="project" value="InterPro"/>
</dbReference>
<dbReference type="GO" id="GO:0006883">
    <property type="term" value="P:intracellular sodium ion homeostasis"/>
    <property type="evidence" value="ECO:0007669"/>
    <property type="project" value="Ensembl"/>
</dbReference>
<dbReference type="GO" id="GO:0030501">
    <property type="term" value="P:positive regulation of bone mineralization"/>
    <property type="evidence" value="ECO:0007669"/>
    <property type="project" value="Ensembl"/>
</dbReference>
<dbReference type="GO" id="GO:0098735">
    <property type="term" value="P:positive regulation of the force of heart contraction"/>
    <property type="evidence" value="ECO:0007669"/>
    <property type="project" value="Ensembl"/>
</dbReference>
<dbReference type="GO" id="GO:0035994">
    <property type="term" value="P:response to muscle stretch"/>
    <property type="evidence" value="ECO:0007669"/>
    <property type="project" value="Ensembl"/>
</dbReference>
<dbReference type="GO" id="GO:0098719">
    <property type="term" value="P:sodium ion import across plasma membrane"/>
    <property type="evidence" value="ECO:0007669"/>
    <property type="project" value="Ensembl"/>
</dbReference>
<dbReference type="GO" id="GO:0035725">
    <property type="term" value="P:sodium ion transmembrane transport"/>
    <property type="evidence" value="ECO:0000314"/>
    <property type="project" value="UniProtKB"/>
</dbReference>
<dbReference type="FunFam" id="1.20.1420.30:FF:000001">
    <property type="entry name" value="sodium/calcium exchanger 1 isoform X1"/>
    <property type="match status" value="1"/>
</dbReference>
<dbReference type="FunFam" id="1.20.1420.30:FF:000003">
    <property type="entry name" value="sodium/calcium exchanger 1 isoform X1"/>
    <property type="match status" value="1"/>
</dbReference>
<dbReference type="FunFam" id="2.60.40.2030:FF:000001">
    <property type="entry name" value="sodium/calcium exchanger 1 isoform X1"/>
    <property type="match status" value="1"/>
</dbReference>
<dbReference type="Gene3D" id="2.60.40.2030">
    <property type="match status" value="2"/>
</dbReference>
<dbReference type="Gene3D" id="1.20.1420.30">
    <property type="entry name" value="NCX, central ion-binding region"/>
    <property type="match status" value="2"/>
</dbReference>
<dbReference type="InterPro" id="IPR051171">
    <property type="entry name" value="CaCA"/>
</dbReference>
<dbReference type="InterPro" id="IPR038081">
    <property type="entry name" value="CalX-like_sf"/>
</dbReference>
<dbReference type="InterPro" id="IPR003644">
    <property type="entry name" value="Calx_beta"/>
</dbReference>
<dbReference type="InterPro" id="IPR001623">
    <property type="entry name" value="DnaJ_domain"/>
</dbReference>
<dbReference type="InterPro" id="IPR004836">
    <property type="entry name" value="Na_Ca_Ex"/>
</dbReference>
<dbReference type="InterPro" id="IPR032452">
    <property type="entry name" value="Na_Ca_Ex_C-exten"/>
</dbReference>
<dbReference type="InterPro" id="IPR002987">
    <property type="entry name" value="NaCa_exhngr1"/>
</dbReference>
<dbReference type="InterPro" id="IPR004837">
    <property type="entry name" value="NaCa_Exmemb"/>
</dbReference>
<dbReference type="InterPro" id="IPR044880">
    <property type="entry name" value="NCX_ion-bd_dom_sf"/>
</dbReference>
<dbReference type="NCBIfam" id="TIGR00845">
    <property type="entry name" value="caca"/>
    <property type="match status" value="1"/>
</dbReference>
<dbReference type="PANTHER" id="PTHR11878">
    <property type="entry name" value="SODIUM/CALCIUM EXCHANGER"/>
    <property type="match status" value="1"/>
</dbReference>
<dbReference type="PANTHER" id="PTHR11878:SF6">
    <property type="entry name" value="SODIUM_CALCIUM EXCHANGER 1"/>
    <property type="match status" value="1"/>
</dbReference>
<dbReference type="Pfam" id="PF03160">
    <property type="entry name" value="Calx-beta"/>
    <property type="match status" value="1"/>
</dbReference>
<dbReference type="Pfam" id="PF01699">
    <property type="entry name" value="Na_Ca_ex"/>
    <property type="match status" value="2"/>
</dbReference>
<dbReference type="Pfam" id="PF16494">
    <property type="entry name" value="Na_Ca_ex_C"/>
    <property type="match status" value="1"/>
</dbReference>
<dbReference type="PRINTS" id="PR01259">
    <property type="entry name" value="NACAEXCHNGR"/>
</dbReference>
<dbReference type="PRINTS" id="PR01260">
    <property type="entry name" value="NACAEXCHNGR1"/>
</dbReference>
<dbReference type="SMART" id="SM00237">
    <property type="entry name" value="Calx_beta"/>
    <property type="match status" value="2"/>
</dbReference>
<dbReference type="SUPFAM" id="SSF141072">
    <property type="entry name" value="CalX-like"/>
    <property type="match status" value="2"/>
</dbReference>
<protein>
    <recommendedName>
        <fullName>Sodium/calcium exchanger 1</fullName>
    </recommendedName>
    <alternativeName>
        <fullName>Na(+)/Ca(2+)-exchange protein 1</fullName>
    </alternativeName>
    <alternativeName>
        <fullName>Solute carrier family 8 member 1</fullName>
    </alternativeName>
</protein>
<name>NAC1_CANLF</name>
<keyword id="KW-0002">3D-structure</keyword>
<keyword id="KW-0050">Antiport</keyword>
<keyword id="KW-0106">Calcium</keyword>
<keyword id="KW-0109">Calcium transport</keyword>
<keyword id="KW-0112">Calmodulin-binding</keyword>
<keyword id="KW-1003">Cell membrane</keyword>
<keyword id="KW-0325">Glycoprotein</keyword>
<keyword id="KW-0406">Ion transport</keyword>
<keyword id="KW-0472">Membrane</keyword>
<keyword id="KW-0479">Metal-binding</keyword>
<keyword id="KW-0597">Phosphoprotein</keyword>
<keyword id="KW-1185">Reference proteome</keyword>
<keyword id="KW-0677">Repeat</keyword>
<keyword id="KW-0732">Signal</keyword>
<keyword id="KW-0915">Sodium</keyword>
<keyword id="KW-0739">Sodium transport</keyword>
<keyword id="KW-0812">Transmembrane</keyword>
<keyword id="KW-1133">Transmembrane helix</keyword>
<keyword id="KW-0813">Transport</keyword>
<gene>
    <name type="primary">SLC8A1</name>
    <name evidence="10" type="synonym">NCX1</name>
</gene>
<proteinExistence type="evidence at protein level"/>
<feature type="signal peptide" evidence="2">
    <location>
        <begin position="1"/>
        <end position="32"/>
    </location>
</feature>
<feature type="chain" id="PRO_0000019376" description="Sodium/calcium exchanger 1">
    <location>
        <begin position="33"/>
        <end position="970"/>
    </location>
</feature>
<feature type="topological domain" description="Extracellular" evidence="2">
    <location>
        <begin position="33"/>
        <end position="71"/>
    </location>
</feature>
<feature type="transmembrane region" description="Helical" evidence="2">
    <location>
        <begin position="72"/>
        <end position="92"/>
    </location>
</feature>
<feature type="topological domain" description="Cytoplasmic" evidence="2">
    <location>
        <begin position="93"/>
        <end position="133"/>
    </location>
</feature>
<feature type="transmembrane region" description="Helical" evidence="2">
    <location>
        <begin position="134"/>
        <end position="154"/>
    </location>
</feature>
<feature type="topological domain" description="Extracellular" evidence="2">
    <location>
        <begin position="155"/>
        <end position="167"/>
    </location>
</feature>
<feature type="transmembrane region" description="Helical" evidence="2">
    <location>
        <begin position="168"/>
        <end position="188"/>
    </location>
</feature>
<feature type="topological domain" description="Cytoplasmic" evidence="2">
    <location>
        <begin position="189"/>
        <end position="201"/>
    </location>
</feature>
<feature type="transmembrane region" description="Helical" evidence="2">
    <location>
        <begin position="202"/>
        <end position="222"/>
    </location>
</feature>
<feature type="topological domain" description="Extracellular" evidence="2">
    <location>
        <begin position="223"/>
        <end position="228"/>
    </location>
</feature>
<feature type="transmembrane region" description="Helical" evidence="2">
    <location>
        <begin position="229"/>
        <end position="249"/>
    </location>
</feature>
<feature type="topological domain" description="Cytoplasmic" evidence="11">
    <location>
        <begin position="250"/>
        <end position="797"/>
    </location>
</feature>
<feature type="transmembrane region" description="Helical" evidence="2">
    <location>
        <begin position="798"/>
        <end position="818"/>
    </location>
</feature>
<feature type="topological domain" description="Extracellular" evidence="2">
    <location>
        <begin position="819"/>
        <end position="821"/>
    </location>
</feature>
<feature type="transmembrane region" description="Helical" evidence="2">
    <location>
        <begin position="822"/>
        <end position="842"/>
    </location>
</feature>
<feature type="topological domain" description="Cytoplasmic" evidence="2">
    <location>
        <begin position="843"/>
        <end position="871"/>
    </location>
</feature>
<feature type="transmembrane region" description="Helical" evidence="2">
    <location>
        <begin position="872"/>
        <end position="892"/>
    </location>
</feature>
<feature type="topological domain" description="Extracellular" evidence="2">
    <location>
        <begin position="893"/>
        <end position="903"/>
    </location>
</feature>
<feature type="transmembrane region" description="Helical" evidence="2">
    <location>
        <begin position="904"/>
        <end position="924"/>
    </location>
</feature>
<feature type="topological domain" description="Cytoplasmic" evidence="2">
    <location>
        <begin position="925"/>
        <end position="941"/>
    </location>
</feature>
<feature type="transmembrane region" description="Helical" evidence="2">
    <location>
        <begin position="942"/>
        <end position="962"/>
    </location>
</feature>
<feature type="topological domain" description="Extracellular" evidence="2">
    <location>
        <begin position="963"/>
        <end position="970"/>
    </location>
</feature>
<feature type="repeat" description="Alpha-1">
    <location>
        <begin position="138"/>
        <end position="178"/>
    </location>
</feature>
<feature type="domain" description="Calx-beta 1">
    <location>
        <begin position="393"/>
        <end position="493"/>
    </location>
</feature>
<feature type="domain" description="Calx-beta 2">
    <location>
        <begin position="524"/>
        <end position="624"/>
    </location>
</feature>
<feature type="repeat" description="Alpha-2">
    <location>
        <begin position="839"/>
        <end position="875"/>
    </location>
</feature>
<feature type="region of interest" description="Putative calmodulin-binding region" evidence="12">
    <location>
        <begin position="251"/>
        <end position="270"/>
    </location>
</feature>
<feature type="binding site" evidence="17 18">
    <location>
        <position position="417"/>
    </location>
    <ligand>
        <name>Ca(2+)</name>
        <dbReference type="ChEBI" id="CHEBI:29108"/>
        <label>1</label>
    </ligand>
</feature>
<feature type="binding site" evidence="17 18">
    <location>
        <position position="417"/>
    </location>
    <ligand>
        <name>Ca(2+)</name>
        <dbReference type="ChEBI" id="CHEBI:29108"/>
        <label>2</label>
    </ligand>
</feature>
<feature type="binding site" evidence="13 17 18">
    <location>
        <position position="417"/>
    </location>
    <ligand>
        <name>Ca(2+)</name>
        <dbReference type="ChEBI" id="CHEBI:29108"/>
        <label>3</label>
    </ligand>
</feature>
<feature type="binding site" evidence="17">
    <location>
        <position position="453"/>
    </location>
    <ligand>
        <name>Ca(2+)</name>
        <dbReference type="ChEBI" id="CHEBI:29108"/>
        <label>1</label>
    </ligand>
</feature>
<feature type="binding site" evidence="13 14">
    <location>
        <position position="453"/>
    </location>
    <ligand>
        <name>Ca(2+)</name>
        <dbReference type="ChEBI" id="CHEBI:29108"/>
        <label>4</label>
    </ligand>
</feature>
<feature type="binding site" evidence="13 17 18">
    <location>
        <position position="478"/>
    </location>
    <ligand>
        <name>Ca(2+)</name>
        <dbReference type="ChEBI" id="CHEBI:29108"/>
        <label>2</label>
    </ligand>
</feature>
<feature type="binding site" evidence="17">
    <location>
        <position position="479"/>
    </location>
    <ligand>
        <name>Ca(2+)</name>
        <dbReference type="ChEBI" id="CHEBI:29108"/>
        <label>1</label>
    </ligand>
</feature>
<feature type="binding site" evidence="13 17 18">
    <location>
        <position position="479"/>
    </location>
    <ligand>
        <name>Ca(2+)</name>
        <dbReference type="ChEBI" id="CHEBI:29108"/>
        <label>2</label>
    </ligand>
</feature>
<feature type="binding site" evidence="13 17 18">
    <location>
        <position position="479"/>
    </location>
    <ligand>
        <name>Ca(2+)</name>
        <dbReference type="ChEBI" id="CHEBI:29108"/>
        <label>3</label>
    </ligand>
</feature>
<feature type="binding site" evidence="14">
    <location>
        <position position="479"/>
    </location>
    <ligand>
        <name>Ca(2+)</name>
        <dbReference type="ChEBI" id="CHEBI:29108"/>
        <label>4</label>
    </ligand>
</feature>
<feature type="binding site" evidence="13 17 18">
    <location>
        <position position="481"/>
    </location>
    <ligand>
        <name>Ca(2+)</name>
        <dbReference type="ChEBI" id="CHEBI:29108"/>
        <label>3</label>
    </ligand>
</feature>
<feature type="binding site" evidence="18">
    <location>
        <position position="483"/>
    </location>
    <ligand>
        <name>Ca(2+)</name>
        <dbReference type="ChEBI" id="CHEBI:29108"/>
        <label>1</label>
    </ligand>
</feature>
<feature type="binding site" evidence="13 18">
    <location>
        <position position="483"/>
    </location>
    <ligand>
        <name>Ca(2+)</name>
        <dbReference type="ChEBI" id="CHEBI:29108"/>
        <label>3</label>
    </ligand>
</feature>
<feature type="binding site" evidence="13 14">
    <location>
        <position position="483"/>
    </location>
    <ligand>
        <name>Ca(2+)</name>
        <dbReference type="ChEBI" id="CHEBI:29108"/>
        <label>4</label>
    </ligand>
</feature>
<feature type="binding site" evidence="13 14">
    <location>
        <position position="486"/>
    </location>
    <ligand>
        <name>Ca(2+)</name>
        <dbReference type="ChEBI" id="CHEBI:29108"/>
        <label>4</label>
    </ligand>
</feature>
<feature type="binding site" evidence="13 17 18">
    <location>
        <position position="530"/>
    </location>
    <ligand>
        <name>Ca(2+)</name>
        <dbReference type="ChEBI" id="CHEBI:29108"/>
        <label>3</label>
    </ligand>
</feature>
<feature type="binding site" evidence="13 17 18">
    <location>
        <position position="531"/>
    </location>
    <ligand>
        <name>Ca(2+)</name>
        <dbReference type="ChEBI" id="CHEBI:29108"/>
        <label>2</label>
    </ligand>
</feature>
<feature type="binding site" evidence="13 17 18">
    <location>
        <position position="532"/>
    </location>
    <ligand>
        <name>Ca(2+)</name>
        <dbReference type="ChEBI" id="CHEBI:29108"/>
        <label>2</label>
    </ligand>
</feature>
<feature type="binding site" evidence="13 17 18">
    <location>
        <position position="532"/>
    </location>
    <ligand>
        <name>Ca(2+)</name>
        <dbReference type="ChEBI" id="CHEBI:29108"/>
        <label>3</label>
    </ligand>
</feature>
<feature type="binding site" evidence="16">
    <location>
        <position position="548"/>
    </location>
    <ligand>
        <name>Ca(2+)</name>
        <dbReference type="ChEBI" id="CHEBI:29108"/>
        <label>5</label>
    </ligand>
</feature>
<feature type="binding site" evidence="15">
    <location>
        <position position="584"/>
    </location>
    <ligand>
        <name>Ca(2+)</name>
        <dbReference type="ChEBI" id="CHEBI:29108"/>
        <label>6</label>
    </ligand>
</feature>
<feature type="binding site" evidence="16">
    <location>
        <position position="610"/>
    </location>
    <ligand>
        <name>Ca(2+)</name>
        <dbReference type="ChEBI" id="CHEBI:29108"/>
        <label>5</label>
    </ligand>
</feature>
<feature type="binding site" evidence="15">
    <location>
        <position position="610"/>
    </location>
    <ligand>
        <name>Ca(2+)</name>
        <dbReference type="ChEBI" id="CHEBI:29108"/>
        <label>6</label>
    </ligand>
</feature>
<feature type="binding site" evidence="15">
    <location>
        <position position="611"/>
    </location>
    <ligand>
        <name>Ca(2+)</name>
        <dbReference type="ChEBI" id="CHEBI:29108"/>
        <label>6</label>
    </ligand>
</feature>
<feature type="binding site" evidence="16">
    <location>
        <position position="612"/>
    </location>
    <ligand>
        <name>Ca(2+)</name>
        <dbReference type="ChEBI" id="CHEBI:29108"/>
        <label>5</label>
    </ligand>
</feature>
<feature type="binding site" evidence="15">
    <location>
        <position position="612"/>
    </location>
    <ligand>
        <name>Ca(2+)</name>
        <dbReference type="ChEBI" id="CHEBI:29108"/>
        <label>6</label>
    </ligand>
</feature>
<feature type="binding site" evidence="16">
    <location>
        <position position="715"/>
    </location>
    <ligand>
        <name>Ca(2+)</name>
        <dbReference type="ChEBI" id="CHEBI:29108"/>
        <label>5</label>
    </ligand>
</feature>
<feature type="modified residue" description="Phosphoserine" evidence="1">
    <location>
        <position position="282"/>
    </location>
</feature>
<feature type="modified residue" description="Phosphoserine" evidence="1 2">
    <location>
        <position position="389"/>
    </location>
</feature>
<feature type="glycosylation site" description="N-linked (GlcNAc...) asparagine" evidence="2">
    <location>
        <position position="41"/>
    </location>
</feature>
<feature type="glycosylation site" description="N-linked (GlcNAc...) asparagine" evidence="2">
    <location>
        <position position="157"/>
    </location>
</feature>
<feature type="mutagenesis site" description="Abolishes regulation by micromolar Ca(2+)." evidence="6">
    <original>E</original>
    <variation>L</variation>
    <location>
        <position position="548"/>
    </location>
</feature>
<feature type="mutagenesis site" description="No effect on regulation by micromolar Ca(2+)." evidence="6">
    <original>D</original>
    <variation>V</variation>
    <location>
        <position position="584"/>
    </location>
</feature>
<feature type="mutagenesis site" description="Abolishes regulation by micromolar Ca(2+)." evidence="6">
    <original>D</original>
    <variation>V</variation>
    <location>
        <position position="610"/>
    </location>
</feature>
<feature type="mutagenesis site" description="Decreases affinity for Ca(2+), but retains regulation by micromolar Ca(2+)." evidence="6">
    <original>K</original>
    <variation>E</variation>
    <location>
        <position position="617"/>
    </location>
</feature>
<feature type="helix" evidence="23">
    <location>
        <begin position="316"/>
        <end position="333"/>
    </location>
</feature>
<feature type="helix" evidence="23">
    <location>
        <begin position="339"/>
        <end position="354"/>
    </location>
</feature>
<feature type="strand" evidence="21">
    <location>
        <begin position="403"/>
        <end position="409"/>
    </location>
</feature>
<feature type="strand" evidence="21">
    <location>
        <begin position="411"/>
        <end position="416"/>
    </location>
</feature>
<feature type="strand" evidence="21">
    <location>
        <begin position="419"/>
        <end position="431"/>
    </location>
</feature>
<feature type="strand" evidence="21">
    <location>
        <begin position="437"/>
        <end position="448"/>
    </location>
</feature>
<feature type="turn" evidence="21">
    <location>
        <begin position="450"/>
        <end position="452"/>
    </location>
</feature>
<feature type="strand" evidence="21">
    <location>
        <begin position="458"/>
        <end position="463"/>
    </location>
</feature>
<feature type="strand" evidence="21">
    <location>
        <begin position="469"/>
        <end position="476"/>
    </location>
</feature>
<feature type="strand" evidence="21">
    <location>
        <begin position="486"/>
        <end position="496"/>
    </location>
</feature>
<feature type="strand" evidence="21">
    <location>
        <begin position="515"/>
        <end position="518"/>
    </location>
</feature>
<feature type="strand" evidence="21">
    <location>
        <begin position="522"/>
        <end position="529"/>
    </location>
</feature>
<feature type="strand" evidence="19">
    <location>
        <begin position="536"/>
        <end position="540"/>
    </location>
</feature>
<feature type="strand" evidence="19">
    <location>
        <begin position="542"/>
        <end position="547"/>
    </location>
</feature>
<feature type="strand" evidence="19">
    <location>
        <begin position="552"/>
        <end position="561"/>
    </location>
</feature>
<feature type="strand" evidence="19">
    <location>
        <begin position="567"/>
        <end position="578"/>
    </location>
</feature>
<feature type="turn" evidence="19">
    <location>
        <begin position="580"/>
        <end position="583"/>
    </location>
</feature>
<feature type="strand" evidence="22">
    <location>
        <begin position="584"/>
        <end position="586"/>
    </location>
</feature>
<feature type="strand" evidence="19">
    <location>
        <begin position="589"/>
        <end position="594"/>
    </location>
</feature>
<feature type="strand" evidence="19">
    <location>
        <begin position="600"/>
        <end position="607"/>
    </location>
</feature>
<feature type="strand" evidence="19">
    <location>
        <begin position="615"/>
        <end position="623"/>
    </location>
</feature>
<feature type="strand" evidence="20">
    <location>
        <begin position="627"/>
        <end position="629"/>
    </location>
</feature>
<feature type="helix" evidence="22">
    <location>
        <begin position="687"/>
        <end position="696"/>
    </location>
</feature>
<feature type="strand" evidence="19">
    <location>
        <begin position="708"/>
        <end position="714"/>
    </location>
</feature>